<evidence type="ECO:0000250" key="1"/>
<evidence type="ECO:0000250" key="2">
    <source>
        <dbReference type="UniProtKB" id="Q9BSQ5"/>
    </source>
</evidence>
<evidence type="ECO:0000255" key="3">
    <source>
        <dbReference type="PROSITE-ProRule" id="PRU00148"/>
    </source>
</evidence>
<evidence type="ECO:0000256" key="4">
    <source>
        <dbReference type="SAM" id="MobiDB-lite"/>
    </source>
</evidence>
<evidence type="ECO:0000269" key="5">
    <source>
    </source>
</evidence>
<evidence type="ECO:0000269" key="6">
    <source>
    </source>
</evidence>
<evidence type="ECO:0000303" key="7">
    <source>
    </source>
</evidence>
<evidence type="ECO:0000305" key="8"/>
<evidence type="ECO:0007744" key="9">
    <source>
    </source>
</evidence>
<sequence length="453" mass="49917">MEEEGKKGKKPGIVSPFKRVFLKGEKSRDKKAHEKVTERRPLHTVVLALPERVEPDRLLSDYIEKEVKYLGQLTSIPGYLNPSSRTEILHFIDKAKRSHQLPGHLTQEHDAVLSLSAYNVKLAWRDGEDIILRVPIHDIAAVSYVRDDAAHLVVLKTAQDPGISPSQSLCAESSRGLSAGSLSESAVGPVEACCLVIMATESKVAAEELCSLLSQVFQIVYTESTIDFLDRAIFDGASTPTHHLSLHSDDSSTKVDMKDSYDADASTFCFPDSGDVGGLPPLPFCMQTSPHSKTVSESELSTSATELLQDYMLTLRTKLSSQEIQQFAALLHEYRNGASIHEFCISLRQLYGDSRKFLLLGLRPFIPEKDSQHFENFLETIGVKDGRGIITDSFGRHRRALSTTSTSTINGNRTTGSPDDRSAPSEGDEWDRMISDISSDIEALGCSMDQDSA</sequence>
<reference key="1">
    <citation type="journal article" date="2003" name="Nat. Cell Biol.">
        <title>Rac-MEKK3-MKK3 scaffolding for p38 MAPK activation during hyperosmotic shock.</title>
        <authorList>
            <person name="Uhlik M.T."/>
            <person name="Abell A.N."/>
            <person name="Johnson N.L."/>
            <person name="Sun W."/>
            <person name="Cuevas B.D."/>
            <person name="Lobel-Rice K.E."/>
            <person name="Horne E.A."/>
            <person name="Dell'Acqua M.L."/>
            <person name="Johnson G.L."/>
        </authorList>
    </citation>
    <scope>NUCLEOTIDE SEQUENCE [MRNA] (ISOFORM 1)</scope>
    <scope>FUNCTION</scope>
    <scope>SUBCELLULAR LOCATION</scope>
    <scope>TISSUE SPECIFICITY</scope>
    <scope>INTERACTION WITH MAP3K3; MAP2K3 AND RAC1</scope>
    <source>
        <strain>C57BL/6J</strain>
        <tissue>T-cell lymphoma</tissue>
    </source>
</reference>
<reference key="2">
    <citation type="journal article" date="2005" name="Science">
        <title>The transcriptional landscape of the mammalian genome.</title>
        <authorList>
            <person name="Carninci P."/>
            <person name="Kasukawa T."/>
            <person name="Katayama S."/>
            <person name="Gough J."/>
            <person name="Frith M.C."/>
            <person name="Maeda N."/>
            <person name="Oyama R."/>
            <person name="Ravasi T."/>
            <person name="Lenhard B."/>
            <person name="Wells C."/>
            <person name="Kodzius R."/>
            <person name="Shimokawa K."/>
            <person name="Bajic V.B."/>
            <person name="Brenner S.E."/>
            <person name="Batalov S."/>
            <person name="Forrest A.R."/>
            <person name="Zavolan M."/>
            <person name="Davis M.J."/>
            <person name="Wilming L.G."/>
            <person name="Aidinis V."/>
            <person name="Allen J.E."/>
            <person name="Ambesi-Impiombato A."/>
            <person name="Apweiler R."/>
            <person name="Aturaliya R.N."/>
            <person name="Bailey T.L."/>
            <person name="Bansal M."/>
            <person name="Baxter L."/>
            <person name="Beisel K.W."/>
            <person name="Bersano T."/>
            <person name="Bono H."/>
            <person name="Chalk A.M."/>
            <person name="Chiu K.P."/>
            <person name="Choudhary V."/>
            <person name="Christoffels A."/>
            <person name="Clutterbuck D.R."/>
            <person name="Crowe M.L."/>
            <person name="Dalla E."/>
            <person name="Dalrymple B.P."/>
            <person name="de Bono B."/>
            <person name="Della Gatta G."/>
            <person name="di Bernardo D."/>
            <person name="Down T."/>
            <person name="Engstrom P."/>
            <person name="Fagiolini M."/>
            <person name="Faulkner G."/>
            <person name="Fletcher C.F."/>
            <person name="Fukushima T."/>
            <person name="Furuno M."/>
            <person name="Futaki S."/>
            <person name="Gariboldi M."/>
            <person name="Georgii-Hemming P."/>
            <person name="Gingeras T.R."/>
            <person name="Gojobori T."/>
            <person name="Green R.E."/>
            <person name="Gustincich S."/>
            <person name="Harbers M."/>
            <person name="Hayashi Y."/>
            <person name="Hensch T.K."/>
            <person name="Hirokawa N."/>
            <person name="Hill D."/>
            <person name="Huminiecki L."/>
            <person name="Iacono M."/>
            <person name="Ikeo K."/>
            <person name="Iwama A."/>
            <person name="Ishikawa T."/>
            <person name="Jakt M."/>
            <person name="Kanapin A."/>
            <person name="Katoh M."/>
            <person name="Kawasawa Y."/>
            <person name="Kelso J."/>
            <person name="Kitamura H."/>
            <person name="Kitano H."/>
            <person name="Kollias G."/>
            <person name="Krishnan S.P."/>
            <person name="Kruger A."/>
            <person name="Kummerfeld S.K."/>
            <person name="Kurochkin I.V."/>
            <person name="Lareau L.F."/>
            <person name="Lazarevic D."/>
            <person name="Lipovich L."/>
            <person name="Liu J."/>
            <person name="Liuni S."/>
            <person name="McWilliam S."/>
            <person name="Madan Babu M."/>
            <person name="Madera M."/>
            <person name="Marchionni L."/>
            <person name="Matsuda H."/>
            <person name="Matsuzawa S."/>
            <person name="Miki H."/>
            <person name="Mignone F."/>
            <person name="Miyake S."/>
            <person name="Morris K."/>
            <person name="Mottagui-Tabar S."/>
            <person name="Mulder N."/>
            <person name="Nakano N."/>
            <person name="Nakauchi H."/>
            <person name="Ng P."/>
            <person name="Nilsson R."/>
            <person name="Nishiguchi S."/>
            <person name="Nishikawa S."/>
            <person name="Nori F."/>
            <person name="Ohara O."/>
            <person name="Okazaki Y."/>
            <person name="Orlando V."/>
            <person name="Pang K.C."/>
            <person name="Pavan W.J."/>
            <person name="Pavesi G."/>
            <person name="Pesole G."/>
            <person name="Petrovsky N."/>
            <person name="Piazza S."/>
            <person name="Reed J."/>
            <person name="Reid J.F."/>
            <person name="Ring B.Z."/>
            <person name="Ringwald M."/>
            <person name="Rost B."/>
            <person name="Ruan Y."/>
            <person name="Salzberg S.L."/>
            <person name="Sandelin A."/>
            <person name="Schneider C."/>
            <person name="Schoenbach C."/>
            <person name="Sekiguchi K."/>
            <person name="Semple C.A."/>
            <person name="Seno S."/>
            <person name="Sessa L."/>
            <person name="Sheng Y."/>
            <person name="Shibata Y."/>
            <person name="Shimada H."/>
            <person name="Shimada K."/>
            <person name="Silva D."/>
            <person name="Sinclair B."/>
            <person name="Sperling S."/>
            <person name="Stupka E."/>
            <person name="Sugiura K."/>
            <person name="Sultana R."/>
            <person name="Takenaka Y."/>
            <person name="Taki K."/>
            <person name="Tammoja K."/>
            <person name="Tan S.L."/>
            <person name="Tang S."/>
            <person name="Taylor M.S."/>
            <person name="Tegner J."/>
            <person name="Teichmann S.A."/>
            <person name="Ueda H.R."/>
            <person name="van Nimwegen E."/>
            <person name="Verardo R."/>
            <person name="Wei C.L."/>
            <person name="Yagi K."/>
            <person name="Yamanishi H."/>
            <person name="Zabarovsky E."/>
            <person name="Zhu S."/>
            <person name="Zimmer A."/>
            <person name="Hide W."/>
            <person name="Bult C."/>
            <person name="Grimmond S.M."/>
            <person name="Teasdale R.D."/>
            <person name="Liu E.T."/>
            <person name="Brusic V."/>
            <person name="Quackenbush J."/>
            <person name="Wahlestedt C."/>
            <person name="Mattick J.S."/>
            <person name="Hume D.A."/>
            <person name="Kai C."/>
            <person name="Sasaki D."/>
            <person name="Tomaru Y."/>
            <person name="Fukuda S."/>
            <person name="Kanamori-Katayama M."/>
            <person name="Suzuki M."/>
            <person name="Aoki J."/>
            <person name="Arakawa T."/>
            <person name="Iida J."/>
            <person name="Imamura K."/>
            <person name="Itoh M."/>
            <person name="Kato T."/>
            <person name="Kawaji H."/>
            <person name="Kawagashira N."/>
            <person name="Kawashima T."/>
            <person name="Kojima M."/>
            <person name="Kondo S."/>
            <person name="Konno H."/>
            <person name="Nakano K."/>
            <person name="Ninomiya N."/>
            <person name="Nishio T."/>
            <person name="Okada M."/>
            <person name="Plessy C."/>
            <person name="Shibata K."/>
            <person name="Shiraki T."/>
            <person name="Suzuki S."/>
            <person name="Tagami M."/>
            <person name="Waki K."/>
            <person name="Watahiki A."/>
            <person name="Okamura-Oho Y."/>
            <person name="Suzuki H."/>
            <person name="Kawai J."/>
            <person name="Hayashizaki Y."/>
        </authorList>
    </citation>
    <scope>NUCLEOTIDE SEQUENCE [LARGE SCALE MRNA] (ISOFORM 1)</scope>
    <source>
        <strain>NOD</strain>
        <tissue>Dendritic cell</tissue>
    </source>
</reference>
<reference key="3">
    <citation type="journal article" date="2009" name="PLoS Biol.">
        <title>Lineage-specific biology revealed by a finished genome assembly of the mouse.</title>
        <authorList>
            <person name="Church D.M."/>
            <person name="Goodstadt L."/>
            <person name="Hillier L.W."/>
            <person name="Zody M.C."/>
            <person name="Goldstein S."/>
            <person name="She X."/>
            <person name="Bult C.J."/>
            <person name="Agarwala R."/>
            <person name="Cherry J.L."/>
            <person name="DiCuccio M."/>
            <person name="Hlavina W."/>
            <person name="Kapustin Y."/>
            <person name="Meric P."/>
            <person name="Maglott D."/>
            <person name="Birtle Z."/>
            <person name="Marques A.C."/>
            <person name="Graves T."/>
            <person name="Zhou S."/>
            <person name="Teague B."/>
            <person name="Potamousis K."/>
            <person name="Churas C."/>
            <person name="Place M."/>
            <person name="Herschleb J."/>
            <person name="Runnheim R."/>
            <person name="Forrest D."/>
            <person name="Amos-Landgraf J."/>
            <person name="Schwartz D.C."/>
            <person name="Cheng Z."/>
            <person name="Lindblad-Toh K."/>
            <person name="Eichler E.E."/>
            <person name="Ponting C.P."/>
        </authorList>
    </citation>
    <scope>NUCLEOTIDE SEQUENCE [LARGE SCALE GENOMIC DNA]</scope>
    <scope>ALTERNATIVE SPLICING (ISOFORMS 1 AND 2)</scope>
    <source>
        <strain>C57BL/6J</strain>
    </source>
</reference>
<reference key="4">
    <citation type="journal article" date="2004" name="Genome Res.">
        <title>The status, quality, and expansion of the NIH full-length cDNA project: the Mammalian Gene Collection (MGC).</title>
        <authorList>
            <consortium name="The MGC Project Team"/>
        </authorList>
    </citation>
    <scope>NUCLEOTIDE SEQUENCE [LARGE SCALE MRNA] (ISOFORM 1)</scope>
    <source>
        <strain>FVB/N</strain>
        <tissue>Mammary tumor</tissue>
    </source>
</reference>
<reference key="5">
    <citation type="journal article" date="2007" name="Proc. Natl. Acad. Sci. U.S.A.">
        <title>Large-scale phosphorylation analysis of mouse liver.</title>
        <authorList>
            <person name="Villen J."/>
            <person name="Beausoleil S.A."/>
            <person name="Gerber S.A."/>
            <person name="Gygi S.P."/>
        </authorList>
    </citation>
    <scope>IDENTIFICATION BY MASS SPECTROMETRY [LARGE SCALE ANALYSIS]</scope>
    <source>
        <tissue>Liver</tissue>
    </source>
</reference>
<reference key="6">
    <citation type="journal article" date="2009" name="Nat. Med.">
        <title>Regulation of cardiovascular development and integrity by the heart of glass-cerebral cavernous malformation protein pathway.</title>
        <authorList>
            <person name="Kleaveland B."/>
            <person name="Zheng X."/>
            <person name="Liu J.J."/>
            <person name="Blum Y."/>
            <person name="Tung J.J."/>
            <person name="Zou Z."/>
            <person name="Sweeney S.M."/>
            <person name="Chen M."/>
            <person name="Guo L."/>
            <person name="Lu M.M."/>
            <person name="Zhou D."/>
            <person name="Kitajewski J."/>
            <person name="Affolter M."/>
            <person name="Ginsberg M.H."/>
            <person name="Kahn M.L."/>
        </authorList>
    </citation>
    <scope>FUNCTION</scope>
    <scope>INTERACTION WITH HEG1 AND KRIT1</scope>
    <scope>DEVELOPMENTAL STAGE</scope>
</reference>
<reference key="7">
    <citation type="journal article" date="2010" name="Cell">
        <title>A tissue-specific atlas of mouse protein phosphorylation and expression.</title>
        <authorList>
            <person name="Huttlin E.L."/>
            <person name="Jedrychowski M.P."/>
            <person name="Elias J.E."/>
            <person name="Goswami T."/>
            <person name="Rad R."/>
            <person name="Beausoleil S.A."/>
            <person name="Villen J."/>
            <person name="Haas W."/>
            <person name="Sowa M.E."/>
            <person name="Gygi S.P."/>
        </authorList>
    </citation>
    <scope>PHOSPHORYLATION [LARGE SCALE ANALYSIS] AT SER-393; SER-402; THR-403; SER-405 AND THR-408</scope>
    <scope>IDENTIFICATION BY MASS SPECTROMETRY [LARGE SCALE ANALYSIS]</scope>
    <source>
        <tissue>Brown adipose tissue</tissue>
        <tissue>Kidney</tissue>
        <tissue>Lung</tissue>
        <tissue>Spleen</tissue>
    </source>
</reference>
<protein>
    <recommendedName>
        <fullName>Cerebral cavernous malformations protein 2 homolog</fullName>
    </recommendedName>
    <alternativeName>
        <fullName evidence="2">Malcavernin</fullName>
    </alternativeName>
    <alternativeName>
        <fullName evidence="7">Osmosensing scaffold for MEKK3</fullName>
    </alternativeName>
</protein>
<keyword id="KW-0025">Alternative splicing</keyword>
<keyword id="KW-0963">Cytoplasm</keyword>
<keyword id="KW-0597">Phosphoprotein</keyword>
<keyword id="KW-1185">Reference proteome</keyword>
<accession>Q8K2Y9</accession>
<accession>Q5SUA3</accession>
<comment type="function">
    <text evidence="5 6">Component of the CCM signaling pathway which is a crucial regulator of heart and vessel formation and integrity. May act through the stabilization of endothelial cell junctions. May also function as a scaffold protein for MAP2K3-MAP3K3 signaling. Seems to play a major role in the modulation of MAP3K3-dependent p38 activation induced by hyperosmotic shock.</text>
</comment>
<comment type="subunit">
    <text evidence="1 5 6">Part of a complex with MAP2K3, MAP3K3 and RAC1. Binds RAC1 directly and independently of its nucleotide-bound state. Interacts with PDCD10 (By similarity). Interacts with HEG1 and KRIT1; KRIT1 greatly facilitates the interaction with HEG1.</text>
</comment>
<comment type="subcellular location">
    <subcellularLocation>
        <location evidence="5">Cytoplasm</location>
    </subcellularLocation>
    <text>Treatment with sorbitol caused relocalization to ruffle-like structures.</text>
</comment>
<comment type="alternative products">
    <event type="alternative splicing"/>
    <isoform>
        <id>Q8K2Y9-1</id>
        <name>1</name>
        <sequence type="displayed"/>
    </isoform>
    <isoform>
        <id>Q8K2Y9-2</id>
        <name>2</name>
        <sequence type="described" ref="VSP_024404 VSP_024405"/>
    </isoform>
</comment>
<comment type="tissue specificity">
    <text evidence="5">Highly expressed in heart, lower expression in kidney, lung and liver (at protein level).</text>
</comment>
<comment type="developmental stage">
    <text evidence="6">Expressed primarily in the developing neural tube at 10.5 dpc.</text>
</comment>
<comment type="domain">
    <text evidence="1">The C-terminal region constitutes an independently folded domain that has structural similarity with the USH1C (harmonin) N-terminus, despite very low sequence similarity.</text>
</comment>
<comment type="similarity">
    <text evidence="8">Belongs to the CCM2 family.</text>
</comment>
<gene>
    <name type="primary">Ccm2</name>
    <name type="synonym">Osm</name>
</gene>
<proteinExistence type="evidence at protein level"/>
<feature type="chain" id="PRO_0000089425" description="Cerebral cavernous malformations protein 2 homolog">
    <location>
        <begin position="1"/>
        <end position="453"/>
    </location>
</feature>
<feature type="domain" description="PID" evidence="3">
    <location>
        <begin position="59"/>
        <end position="248"/>
    </location>
</feature>
<feature type="region of interest" description="Disordered" evidence="4">
    <location>
        <begin position="1"/>
        <end position="36"/>
    </location>
</feature>
<feature type="region of interest" description="Harmonin homology domain">
    <location>
        <begin position="292"/>
        <end position="385"/>
    </location>
</feature>
<feature type="region of interest" description="Disordered" evidence="4">
    <location>
        <begin position="401"/>
        <end position="432"/>
    </location>
</feature>
<feature type="compositionally biased region" description="Basic and acidic residues" evidence="4">
    <location>
        <begin position="22"/>
        <end position="36"/>
    </location>
</feature>
<feature type="compositionally biased region" description="Polar residues" evidence="4">
    <location>
        <begin position="401"/>
        <end position="417"/>
    </location>
</feature>
<feature type="modified residue" description="Phosphoserine" evidence="2">
    <location>
        <position position="15"/>
    </location>
</feature>
<feature type="modified residue" description="Phosphoserine" evidence="2">
    <location>
        <position position="164"/>
    </location>
</feature>
<feature type="modified residue" description="Phosphoserine" evidence="9">
    <location>
        <position position="393"/>
    </location>
</feature>
<feature type="modified residue" description="Phosphoserine" evidence="9">
    <location>
        <position position="402"/>
    </location>
</feature>
<feature type="modified residue" description="Phosphothreonine" evidence="9">
    <location>
        <position position="403"/>
    </location>
</feature>
<feature type="modified residue" description="Phosphoserine" evidence="9">
    <location>
        <position position="405"/>
    </location>
</feature>
<feature type="modified residue" description="Phosphothreonine" evidence="9">
    <location>
        <position position="408"/>
    </location>
</feature>
<feature type="splice variant" id="VSP_024404" description="In isoform 2." evidence="8">
    <original>MEEEGKKGKK</original>
    <variation>MENE</variation>
    <location>
        <begin position="1"/>
        <end position="10"/>
    </location>
</feature>
<feature type="splice variant" id="VSP_024405" description="In isoform 2." evidence="8">
    <location>
        <begin position="279"/>
        <end position="287"/>
    </location>
</feature>
<name>CCM2_MOUSE</name>
<organism>
    <name type="scientific">Mus musculus</name>
    <name type="common">Mouse</name>
    <dbReference type="NCBI Taxonomy" id="10090"/>
    <lineage>
        <taxon>Eukaryota</taxon>
        <taxon>Metazoa</taxon>
        <taxon>Chordata</taxon>
        <taxon>Craniata</taxon>
        <taxon>Vertebrata</taxon>
        <taxon>Euteleostomi</taxon>
        <taxon>Mammalia</taxon>
        <taxon>Eutheria</taxon>
        <taxon>Euarchontoglires</taxon>
        <taxon>Glires</taxon>
        <taxon>Rodentia</taxon>
        <taxon>Myomorpha</taxon>
        <taxon>Muroidea</taxon>
        <taxon>Muridae</taxon>
        <taxon>Murinae</taxon>
        <taxon>Mus</taxon>
        <taxon>Mus</taxon>
    </lineage>
</organism>
<dbReference type="EMBL" id="AY442689">
    <property type="protein sequence ID" value="AAR29082.1"/>
    <property type="molecule type" value="mRNA"/>
</dbReference>
<dbReference type="EMBL" id="AK155145">
    <property type="protein sequence ID" value="BAE33075.1"/>
    <property type="molecule type" value="mRNA"/>
</dbReference>
<dbReference type="EMBL" id="AL603787">
    <property type="status" value="NOT_ANNOTATED_CDS"/>
    <property type="molecule type" value="Genomic_DNA"/>
</dbReference>
<dbReference type="EMBL" id="AL646047">
    <property type="status" value="NOT_ANNOTATED_CDS"/>
    <property type="molecule type" value="Genomic_DNA"/>
</dbReference>
<dbReference type="EMBL" id="BC029157">
    <property type="protein sequence ID" value="AAH29157.1"/>
    <property type="molecule type" value="mRNA"/>
</dbReference>
<dbReference type="CCDS" id="CCDS24422.1">
    <molecule id="Q8K2Y9-1"/>
</dbReference>
<dbReference type="RefSeq" id="NP_666126.1">
    <molecule id="Q8K2Y9-1"/>
    <property type="nucleotide sequence ID" value="NM_146014.3"/>
</dbReference>
<dbReference type="SMR" id="Q8K2Y9"/>
<dbReference type="BioGRID" id="229755">
    <property type="interactions" value="2"/>
</dbReference>
<dbReference type="ComplexPortal" id="CPX-4621">
    <property type="entry name" value="CCM complex"/>
</dbReference>
<dbReference type="CORUM" id="Q8K2Y9"/>
<dbReference type="FunCoup" id="Q8K2Y9">
    <property type="interactions" value="1233"/>
</dbReference>
<dbReference type="IntAct" id="Q8K2Y9">
    <property type="interactions" value="1"/>
</dbReference>
<dbReference type="MINT" id="Q8K2Y9"/>
<dbReference type="STRING" id="10090.ENSMUSP00000000388"/>
<dbReference type="GlyGen" id="Q8K2Y9">
    <property type="glycosylation" value="1 site, 1 O-linked glycan (1 site)"/>
</dbReference>
<dbReference type="iPTMnet" id="Q8K2Y9"/>
<dbReference type="PhosphoSitePlus" id="Q8K2Y9"/>
<dbReference type="jPOST" id="Q8K2Y9"/>
<dbReference type="PaxDb" id="10090-ENSMUSP00000000388"/>
<dbReference type="ProteomicsDB" id="281124">
    <molecule id="Q8K2Y9-1"/>
</dbReference>
<dbReference type="ProteomicsDB" id="281125">
    <molecule id="Q8K2Y9-2"/>
</dbReference>
<dbReference type="Pumba" id="Q8K2Y9"/>
<dbReference type="Antibodypedia" id="13519">
    <property type="antibodies" value="353 antibodies from 29 providers"/>
</dbReference>
<dbReference type="DNASU" id="216527"/>
<dbReference type="Ensembl" id="ENSMUST00000000388.15">
    <molecule id="Q8K2Y9-1"/>
    <property type="protein sequence ID" value="ENSMUSP00000000388.9"/>
    <property type="gene ID" value="ENSMUSG00000000378.16"/>
</dbReference>
<dbReference type="GeneID" id="216527"/>
<dbReference type="KEGG" id="mmu:216527"/>
<dbReference type="UCSC" id="uc007hyv.2">
    <molecule id="Q8K2Y9-1"/>
    <property type="organism name" value="mouse"/>
</dbReference>
<dbReference type="AGR" id="MGI:2384924"/>
<dbReference type="CTD" id="83605"/>
<dbReference type="MGI" id="MGI:2384924">
    <property type="gene designation" value="Ccm2"/>
</dbReference>
<dbReference type="VEuPathDB" id="HostDB:ENSMUSG00000000378"/>
<dbReference type="eggNOG" id="ENOG502QSZM">
    <property type="taxonomic scope" value="Eukaryota"/>
</dbReference>
<dbReference type="GeneTree" id="ENSGT00390000016168"/>
<dbReference type="HOGENOM" id="CLU_034621_1_0_1"/>
<dbReference type="InParanoid" id="Q8K2Y9"/>
<dbReference type="OMA" id="LKTXDSS"/>
<dbReference type="OrthoDB" id="5828470at2759"/>
<dbReference type="PhylomeDB" id="Q8K2Y9"/>
<dbReference type="TreeFam" id="TF328517"/>
<dbReference type="BioGRID-ORCS" id="216527">
    <property type="hits" value="14 hits in 78 CRISPR screens"/>
</dbReference>
<dbReference type="ChiTaRS" id="Ccm2">
    <property type="organism name" value="mouse"/>
</dbReference>
<dbReference type="PRO" id="PR:Q8K2Y9"/>
<dbReference type="Proteomes" id="UP000000589">
    <property type="component" value="Chromosome 11"/>
</dbReference>
<dbReference type="RNAct" id="Q8K2Y9">
    <property type="molecule type" value="protein"/>
</dbReference>
<dbReference type="Bgee" id="ENSMUSG00000000378">
    <property type="expression patterns" value="Expressed in peripheral lymph node and 292 other cell types or tissues"/>
</dbReference>
<dbReference type="ExpressionAtlas" id="Q8K2Y9">
    <property type="expression patterns" value="baseline and differential"/>
</dbReference>
<dbReference type="GO" id="GO:0005739">
    <property type="term" value="C:mitochondrion"/>
    <property type="evidence" value="ECO:0007669"/>
    <property type="project" value="Ensembl"/>
</dbReference>
<dbReference type="GO" id="GO:0032991">
    <property type="term" value="C:protein-containing complex"/>
    <property type="evidence" value="ECO:0000314"/>
    <property type="project" value="MGI"/>
</dbReference>
<dbReference type="GO" id="GO:0001568">
    <property type="term" value="P:blood vessel development"/>
    <property type="evidence" value="ECO:0000315"/>
    <property type="project" value="MGI"/>
</dbReference>
<dbReference type="GO" id="GO:0060837">
    <property type="term" value="P:blood vessel endothelial cell differentiation"/>
    <property type="evidence" value="ECO:0000315"/>
    <property type="project" value="MGI"/>
</dbReference>
<dbReference type="GO" id="GO:0045216">
    <property type="term" value="P:cell-cell junction organization"/>
    <property type="evidence" value="ECO:0000315"/>
    <property type="project" value="MGI"/>
</dbReference>
<dbReference type="GO" id="GO:0001885">
    <property type="term" value="P:endothelial cell development"/>
    <property type="evidence" value="ECO:0000315"/>
    <property type="project" value="MGI"/>
</dbReference>
<dbReference type="GO" id="GO:0061154">
    <property type="term" value="P:endothelial tube morphogenesis"/>
    <property type="evidence" value="ECO:0000266"/>
    <property type="project" value="MGI"/>
</dbReference>
<dbReference type="GO" id="GO:0003158">
    <property type="term" value="P:endothelium development"/>
    <property type="evidence" value="ECO:0000303"/>
    <property type="project" value="ComplexPortal"/>
</dbReference>
<dbReference type="GO" id="GO:0007507">
    <property type="term" value="P:heart development"/>
    <property type="evidence" value="ECO:0000315"/>
    <property type="project" value="MGI"/>
</dbReference>
<dbReference type="GO" id="GO:0001701">
    <property type="term" value="P:in utero embryonic development"/>
    <property type="evidence" value="ECO:0000315"/>
    <property type="project" value="MGI"/>
</dbReference>
<dbReference type="GO" id="GO:0048839">
    <property type="term" value="P:inner ear development"/>
    <property type="evidence" value="ECO:0000314"/>
    <property type="project" value="MGI"/>
</dbReference>
<dbReference type="GO" id="GO:0035264">
    <property type="term" value="P:multicellular organism growth"/>
    <property type="evidence" value="ECO:0000315"/>
    <property type="project" value="MGI"/>
</dbReference>
<dbReference type="GO" id="GO:0060039">
    <property type="term" value="P:pericardium development"/>
    <property type="evidence" value="ECO:0000315"/>
    <property type="project" value="MGI"/>
</dbReference>
<dbReference type="GO" id="GO:0045765">
    <property type="term" value="P:regulation of angiogenesis"/>
    <property type="evidence" value="ECO:0000303"/>
    <property type="project" value="ComplexPortal"/>
</dbReference>
<dbReference type="GO" id="GO:0001944">
    <property type="term" value="P:vasculature development"/>
    <property type="evidence" value="ECO:0000315"/>
    <property type="project" value="MGI"/>
</dbReference>
<dbReference type="GO" id="GO:0001570">
    <property type="term" value="P:vasculogenesis"/>
    <property type="evidence" value="ECO:0000316"/>
    <property type="project" value="MGI"/>
</dbReference>
<dbReference type="GO" id="GO:0048845">
    <property type="term" value="P:venous blood vessel morphogenesis"/>
    <property type="evidence" value="ECO:0000315"/>
    <property type="project" value="MGI"/>
</dbReference>
<dbReference type="CDD" id="cd13516">
    <property type="entry name" value="HHD_CCM2"/>
    <property type="match status" value="1"/>
</dbReference>
<dbReference type="CDD" id="cd13166">
    <property type="entry name" value="PTB_CCM2"/>
    <property type="match status" value="1"/>
</dbReference>
<dbReference type="FunFam" id="1.20.1160.20:FF:000004">
    <property type="entry name" value="Cerebral cavernous malformation 2"/>
    <property type="match status" value="1"/>
</dbReference>
<dbReference type="Gene3D" id="1.20.1160.20">
    <property type="match status" value="1"/>
</dbReference>
<dbReference type="Gene3D" id="2.30.29.30">
    <property type="entry name" value="Pleckstrin-homology domain (PH domain)/Phosphotyrosine-binding domain (PTB)"/>
    <property type="match status" value="1"/>
</dbReference>
<dbReference type="InterPro" id="IPR032375">
    <property type="entry name" value="CCM2_C"/>
</dbReference>
<dbReference type="InterPro" id="IPR026159">
    <property type="entry name" value="Malcavernin"/>
</dbReference>
<dbReference type="InterPro" id="IPR011993">
    <property type="entry name" value="PH-like_dom_sf"/>
</dbReference>
<dbReference type="InterPro" id="IPR006020">
    <property type="entry name" value="PTB/PI_dom"/>
</dbReference>
<dbReference type="PANTHER" id="PTHR21642:SF4">
    <property type="entry name" value="CEREBRAL CAVERNOUS MALFORMATIONS 2 PROTEIN"/>
    <property type="match status" value="1"/>
</dbReference>
<dbReference type="PANTHER" id="PTHR21642">
    <property type="entry name" value="CEREBRAL CAVERNOUS MALFORMATIONS PROTEIN 2 HOMOLOG"/>
    <property type="match status" value="1"/>
</dbReference>
<dbReference type="Pfam" id="PF16545">
    <property type="entry name" value="CCM2_C"/>
    <property type="match status" value="1"/>
</dbReference>
<dbReference type="PROSITE" id="PS01179">
    <property type="entry name" value="PID"/>
    <property type="match status" value="1"/>
</dbReference>